<dbReference type="EMBL" id="U79958">
    <property type="protein sequence ID" value="AAB72110.1"/>
    <property type="molecule type" value="mRNA"/>
</dbReference>
<dbReference type="PIR" id="T06794">
    <property type="entry name" value="T06794"/>
</dbReference>
<dbReference type="SMR" id="P93484"/>
<dbReference type="GlyCosmos" id="P93484">
    <property type="glycosylation" value="2 sites, No reported glycans"/>
</dbReference>
<dbReference type="GO" id="GO:0030665">
    <property type="term" value="C:clathrin-coated vesicle membrane"/>
    <property type="evidence" value="ECO:0007669"/>
    <property type="project" value="UniProtKB-SubCell"/>
</dbReference>
<dbReference type="GO" id="GO:0000139">
    <property type="term" value="C:Golgi membrane"/>
    <property type="evidence" value="ECO:0007669"/>
    <property type="project" value="UniProtKB-SubCell"/>
</dbReference>
<dbReference type="GO" id="GO:0005509">
    <property type="term" value="F:calcium ion binding"/>
    <property type="evidence" value="ECO:0007669"/>
    <property type="project" value="InterPro"/>
</dbReference>
<dbReference type="GO" id="GO:0015031">
    <property type="term" value="P:protein transport"/>
    <property type="evidence" value="ECO:0007669"/>
    <property type="project" value="UniProtKB-KW"/>
</dbReference>
<dbReference type="CDD" id="cd00054">
    <property type="entry name" value="EGF_CA"/>
    <property type="match status" value="1"/>
</dbReference>
<dbReference type="CDD" id="cd02125">
    <property type="entry name" value="PA_VSR"/>
    <property type="match status" value="1"/>
</dbReference>
<dbReference type="FunFam" id="3.50.30.30:FF:000001">
    <property type="entry name" value="Vacuolar-sorting receptor 1"/>
    <property type="match status" value="1"/>
</dbReference>
<dbReference type="FunFam" id="2.10.25.10:FF:000178">
    <property type="entry name" value="vacuolar-sorting receptor 1"/>
    <property type="match status" value="1"/>
</dbReference>
<dbReference type="Gene3D" id="3.50.30.30">
    <property type="match status" value="1"/>
</dbReference>
<dbReference type="Gene3D" id="3.40.30.10">
    <property type="entry name" value="Glutaredoxin"/>
    <property type="match status" value="1"/>
</dbReference>
<dbReference type="Gene3D" id="2.10.25.10">
    <property type="entry name" value="Laminin"/>
    <property type="match status" value="3"/>
</dbReference>
<dbReference type="InterPro" id="IPR026823">
    <property type="entry name" value="cEGF"/>
</dbReference>
<dbReference type="InterPro" id="IPR001881">
    <property type="entry name" value="EGF-like_Ca-bd_dom"/>
</dbReference>
<dbReference type="InterPro" id="IPR000742">
    <property type="entry name" value="EGF-like_dom"/>
</dbReference>
<dbReference type="InterPro" id="IPR018097">
    <property type="entry name" value="EGF_Ca-bd_CS"/>
</dbReference>
<dbReference type="InterPro" id="IPR046450">
    <property type="entry name" value="PA_dom_sf"/>
</dbReference>
<dbReference type="InterPro" id="IPR003137">
    <property type="entry name" value="PA_domain"/>
</dbReference>
<dbReference type="InterPro" id="IPR056858">
    <property type="entry name" value="VSR_TRX"/>
</dbReference>
<dbReference type="PANTHER" id="PTHR22702">
    <property type="entry name" value="PROTEASE-ASSOCIATED DOMAIN-CONTAINING PROTEIN"/>
    <property type="match status" value="1"/>
</dbReference>
<dbReference type="PANTHER" id="PTHR22702:SF1">
    <property type="entry name" value="PROTEASE-ASSOCIATED DOMAIN-CONTAINING PROTEIN 1"/>
    <property type="match status" value="1"/>
</dbReference>
<dbReference type="Pfam" id="PF12662">
    <property type="entry name" value="cEGF"/>
    <property type="match status" value="1"/>
</dbReference>
<dbReference type="Pfam" id="PF02225">
    <property type="entry name" value="PA"/>
    <property type="match status" value="1"/>
</dbReference>
<dbReference type="Pfam" id="PF25011">
    <property type="entry name" value="VSR_TRX"/>
    <property type="match status" value="1"/>
</dbReference>
<dbReference type="SMART" id="SM00179">
    <property type="entry name" value="EGF_CA"/>
    <property type="match status" value="1"/>
</dbReference>
<dbReference type="SUPFAM" id="SSF52025">
    <property type="entry name" value="PA domain"/>
    <property type="match status" value="1"/>
</dbReference>
<dbReference type="PROSITE" id="PS00010">
    <property type="entry name" value="ASX_HYDROXYL"/>
    <property type="match status" value="1"/>
</dbReference>
<dbReference type="PROSITE" id="PS01186">
    <property type="entry name" value="EGF_2"/>
    <property type="match status" value="1"/>
</dbReference>
<dbReference type="PROSITE" id="PS01187">
    <property type="entry name" value="EGF_CA"/>
    <property type="match status" value="1"/>
</dbReference>
<protein>
    <recommendedName>
        <fullName>Vacuolar-sorting receptor 1</fullName>
    </recommendedName>
    <alternativeName>
        <fullName>80 kDa proaleurein-binding protein</fullName>
    </alternativeName>
    <alternativeName>
        <fullName>BP-80</fullName>
    </alternativeName>
</protein>
<accession>P93484</accession>
<reference key="1">
    <citation type="journal article" date="1997" name="Plant Physiol.">
        <title>Molecular cloning and further characterization of a probable plant vacuolar sorting receptor.</title>
        <authorList>
            <person name="Paris N."/>
            <person name="Rogers S.W."/>
            <person name="Jiang L."/>
            <person name="Kirsch T."/>
            <person name="Beevers L."/>
            <person name="Phillips T.E."/>
            <person name="Rogers J.C."/>
        </authorList>
    </citation>
    <scope>NUCLEOTIDE SEQUENCE [MRNA]</scope>
    <scope>PROTEIN SEQUENCE OF 23-41; 178-197 AND 394-417</scope>
    <scope>FUNCTION</scope>
    <scope>SUBCELLULAR LOCATION</scope>
    <scope>VARIANT LEU-25</scope>
    <source>
        <tissue>Seed</tissue>
    </source>
</reference>
<reference key="2">
    <citation type="journal article" date="1994" name="Proc. Natl. Acad. Sci. U.S.A.">
        <title>Purification and initial characterization of a potential plant vacuolar targeting receptor.</title>
        <authorList>
            <person name="Kirsch T."/>
            <person name="Paris N."/>
            <person name="Butler J.M."/>
            <person name="Beevers L."/>
            <person name="Rogers J.C."/>
        </authorList>
    </citation>
    <scope>INTERACTION WITH ALEUREIN</scope>
    <scope>TOPOLOGY</scope>
    <scope>SUBCELLULAR LOCATION</scope>
</reference>
<reference key="3">
    <citation type="journal article" date="1999" name="Plant Cell">
        <title>Vacuolar storage proteins and the putative vacuolar sorting receptor BP-80 exit the Golgi apparatus of developing pea cotyledons in different transport vesicles.</title>
        <authorList>
            <person name="Hinz G."/>
            <person name="Hillmer S."/>
            <person name="Baeumer M."/>
            <person name="Hohl I."/>
        </authorList>
    </citation>
    <scope>SUBCELLULAR LOCATION</scope>
</reference>
<reference key="4">
    <citation type="journal article" date="2000" name="Plant Cell">
        <title>Structural requirements for ligand binding by a probable plant vacuolar sorting receptor.</title>
        <authorList>
            <person name="Cao X."/>
            <person name="Rogers S.W."/>
            <person name="Butler J."/>
            <person name="Beevers L."/>
            <person name="Rogers J.C."/>
        </authorList>
    </citation>
    <scope>FUNCTION</scope>
</reference>
<reference key="5">
    <citation type="journal article" date="2001" name="J. Cell Biol.">
        <title>Vacuolar storage proteins are sorted in the cis-cisternae of the pea cotyledon Golgi apparatus.</title>
        <authorList>
            <person name="Hillmer S."/>
            <person name="Movafeghi A."/>
            <person name="Robinson D.G."/>
            <person name="Hinz G."/>
        </authorList>
    </citation>
    <scope>SUBCELLULAR LOCATION</scope>
</reference>
<reference key="6">
    <citation type="journal article" date="2002" name="Plant Cell Physiol.">
        <title>BP-80 and homologs are concentrated on post-Golgi, probable lytic prevacuolar compartments.</title>
        <authorList>
            <person name="Li Y.-B."/>
            <person name="Rogers S.W."/>
            <person name="Tse Y.C."/>
            <person name="Lo S.W."/>
            <person name="Sun S.S.M."/>
            <person name="Jauh G.-Y."/>
            <person name="Jiang L."/>
        </authorList>
    </citation>
    <scope>SUBCELLULAR LOCATION</scope>
</reference>
<comment type="function">
    <text evidence="3 5">Vacuolar-sorting receptor (VSR) involved in clathrin-coated vesicles sorting from Golgi apparatus to vacuoles. Seems to binds preferentially proteins containing a N-terminal NPIR motif.</text>
</comment>
<comment type="subunit">
    <text evidence="4">Interacts with the N-terminal propeptide of aleurein (proaleurein).</text>
</comment>
<comment type="subcellular location">
    <subcellularLocation>
        <location>Membrane</location>
        <topology>Single-pass type I membrane protein</topology>
    </subcellularLocation>
    <subcellularLocation>
        <location>Golgi apparatus membrane</location>
        <topology>Single-pass type I membrane protein</topology>
    </subcellularLocation>
    <subcellularLocation>
        <location>Cytoplasmic vesicle</location>
        <location>Clathrin-coated vesicle membrane</location>
        <topology>Single-pass type I membrane protein</topology>
    </subcellularLocation>
    <subcellularLocation>
        <location>Prevacuolar compartment membrane</location>
        <topology>Single-pass type I membrane protein</topology>
    </subcellularLocation>
    <text>Associated to the Golgi apparatus, mostly on the trans-side, to clathrin-coated vesicles (CCVs) and to prevacuolar compartments (PVCs). May also be associated with the plasma membrane.</text>
</comment>
<comment type="domain">
    <text evidence="1">The tyrosine-based internalization signal may be involved in trafficking at the TGN.</text>
</comment>
<comment type="similarity">
    <text evidence="6">Belongs to the VSR (BP-80) family.</text>
</comment>
<sequence>MKCWRLSAILFLGFMLTSLSTARFVVEKNSLSVTSPEKIKGKHDSAIGNFGIPQYGGSMAGNVVYPKDNSKGCKDFDSSFKSRPGALPTILLLDRGSCFFALKVWNAQKAGASAVLVADDIEEPLITMDTPEEDVSSAKYIENITIPSALIGKSFGEKLKDAISGGDMVNVNLDWREAVPHPDDRVEYELWTNSNDECGVKCDMLIEFLKDFKGAAQILEKGGYTQFTPHYITWYCPHAFTLSKQCKSQCINHGRYCAPDPEQDFNTGYDGKDVVVENLRQLCVFKVAKETEKSWVWWDYVTDFQIRCPMKEKKYNKECANSVIKSLGLDVEKIDKCMGDPNADTENSILKEEQDAQIGKGTRGDVTILPTLVVNNRQYRGKLEKGAVLKAICSGFEETTDPAVCLSNDVETNECLTNNGGCWQDKTANIAACKDTFRGRVCECPLVDGVQFKGDGYTTCEVSGHGRCKINNGGCWHDARNGHAFSACLDDGGVKCQCPAGFKGDGVKNCEDIDECKDKKACQCPECSCKNTWGSYNCSCSGDLLYIKDQDTCISKTASQAKSTWAAFWVVLIALAMIAGGGFLVYKYRIRQYMDSEIRAIMAQYMPLDSQEEGPNHVNHQRG</sequence>
<proteinExistence type="evidence at protein level"/>
<organism>
    <name type="scientific">Pisum sativum</name>
    <name type="common">Garden pea</name>
    <name type="synonym">Lathyrus oleraceus</name>
    <dbReference type="NCBI Taxonomy" id="3888"/>
    <lineage>
        <taxon>Eukaryota</taxon>
        <taxon>Viridiplantae</taxon>
        <taxon>Streptophyta</taxon>
        <taxon>Embryophyta</taxon>
        <taxon>Tracheophyta</taxon>
        <taxon>Spermatophyta</taxon>
        <taxon>Magnoliopsida</taxon>
        <taxon>eudicotyledons</taxon>
        <taxon>Gunneridae</taxon>
        <taxon>Pentapetalae</taxon>
        <taxon>rosids</taxon>
        <taxon>fabids</taxon>
        <taxon>Fabales</taxon>
        <taxon>Fabaceae</taxon>
        <taxon>Papilionoideae</taxon>
        <taxon>50 kb inversion clade</taxon>
        <taxon>NPAAA clade</taxon>
        <taxon>Hologalegina</taxon>
        <taxon>IRL clade</taxon>
        <taxon>Fabeae</taxon>
        <taxon>Pisum</taxon>
    </lineage>
</organism>
<evidence type="ECO:0000250" key="1"/>
<evidence type="ECO:0000255" key="2"/>
<evidence type="ECO:0000269" key="3">
    <source>
    </source>
</evidence>
<evidence type="ECO:0000269" key="4">
    <source>
    </source>
</evidence>
<evidence type="ECO:0000269" key="5">
    <source>
    </source>
</evidence>
<evidence type="ECO:0000305" key="6"/>
<keyword id="KW-0106">Calcium</keyword>
<keyword id="KW-0968">Cytoplasmic vesicle</keyword>
<keyword id="KW-0903">Direct protein sequencing</keyword>
<keyword id="KW-1015">Disulfide bond</keyword>
<keyword id="KW-0245">EGF-like domain</keyword>
<keyword id="KW-0325">Glycoprotein</keyword>
<keyword id="KW-0333">Golgi apparatus</keyword>
<keyword id="KW-0472">Membrane</keyword>
<keyword id="KW-0653">Protein transport</keyword>
<keyword id="KW-0677">Repeat</keyword>
<keyword id="KW-0732">Signal</keyword>
<keyword id="KW-0812">Transmembrane</keyword>
<keyword id="KW-1133">Transmembrane helix</keyword>
<keyword id="KW-0813">Transport</keyword>
<gene>
    <name type="primary">BP80</name>
</gene>
<feature type="signal peptide" evidence="5">
    <location>
        <begin position="1"/>
        <end position="22"/>
    </location>
</feature>
<feature type="chain" id="PRO_0000036463" description="Vacuolar-sorting receptor 1">
    <location>
        <begin position="23"/>
        <end position="623"/>
    </location>
</feature>
<feature type="topological domain" description="Lumenal" evidence="2">
    <location>
        <begin position="23"/>
        <end position="564"/>
    </location>
</feature>
<feature type="transmembrane region" description="Helical" evidence="2">
    <location>
        <begin position="565"/>
        <end position="585"/>
    </location>
</feature>
<feature type="topological domain" description="Cytoplasmic" evidence="2">
    <location>
        <begin position="586"/>
        <end position="623"/>
    </location>
</feature>
<feature type="domain" description="PA">
    <location>
        <begin position="54"/>
        <end position="163"/>
    </location>
</feature>
<feature type="domain" description="EGF-like 1">
    <location>
        <begin position="411"/>
        <end position="461"/>
    </location>
</feature>
<feature type="domain" description="EGF-like 2">
    <location>
        <begin position="464"/>
        <end position="511"/>
    </location>
</feature>
<feature type="domain" description="EGF-like 3; calcium-binding" evidence="2">
    <location>
        <begin position="512"/>
        <end position="554"/>
    </location>
</feature>
<feature type="short sequence motif" description="Tyrosine-based internalization motif" evidence="1">
    <location>
        <begin position="605"/>
        <end position="608"/>
    </location>
</feature>
<feature type="glycosylation site" description="N-linked (GlcNAc...) asparagine" evidence="2">
    <location>
        <position position="143"/>
    </location>
</feature>
<feature type="glycosylation site" description="N-linked (GlcNAc...) asparagine" evidence="2">
    <location>
        <position position="537"/>
    </location>
</feature>
<feature type="disulfide bond" evidence="1">
    <location>
        <begin position="415"/>
        <end position="433"/>
    </location>
</feature>
<feature type="disulfide bond" evidence="1">
    <location>
        <begin position="422"/>
        <end position="442"/>
    </location>
</feature>
<feature type="disulfide bond" evidence="1">
    <location>
        <begin position="444"/>
        <end position="460"/>
    </location>
</feature>
<feature type="disulfide bond" evidence="1">
    <location>
        <begin position="468"/>
        <end position="488"/>
    </location>
</feature>
<feature type="disulfide bond" evidence="1">
    <location>
        <begin position="475"/>
        <end position="496"/>
    </location>
</feature>
<feature type="disulfide bond" evidence="1">
    <location>
        <begin position="498"/>
        <end position="510"/>
    </location>
</feature>
<feature type="disulfide bond" evidence="1">
    <location>
        <begin position="540"/>
        <end position="553"/>
    </location>
</feature>
<feature type="sequence variant" evidence="5">
    <original>V</original>
    <variation>L</variation>
    <location>
        <position position="25"/>
    </location>
</feature>
<feature type="sequence conflict" description="In Ref. 1; AA sequence." evidence="6" ref="1">
    <original>W</original>
    <variation>G</variation>
    <location>
        <position position="191"/>
    </location>
</feature>
<feature type="sequence conflict" description="In Ref. 1; AA sequence." evidence="6" ref="1">
    <original>T</original>
    <variation>Y</variation>
    <location>
        <position position="400"/>
    </location>
</feature>
<name>VSR1_PEA</name>